<keyword id="KW-0456">Lyase</keyword>
<keyword id="KW-0501">Molybdenum cofactor biosynthesis</keyword>
<organism>
    <name type="scientific">Ectopseudomonas mendocina (strain ymp)</name>
    <name type="common">Pseudomonas mendocina</name>
    <dbReference type="NCBI Taxonomy" id="399739"/>
    <lineage>
        <taxon>Bacteria</taxon>
        <taxon>Pseudomonadati</taxon>
        <taxon>Pseudomonadota</taxon>
        <taxon>Gammaproteobacteria</taxon>
        <taxon>Pseudomonadales</taxon>
        <taxon>Pseudomonadaceae</taxon>
        <taxon>Ectopseudomonas</taxon>
    </lineage>
</organism>
<feature type="chain" id="PRO_1000054121" description="Cyclic pyranopterin monophosphate synthase">
    <location>
        <begin position="1"/>
        <end position="158"/>
    </location>
</feature>
<feature type="active site" evidence="1">
    <location>
        <position position="125"/>
    </location>
</feature>
<feature type="binding site" evidence="1">
    <location>
        <begin position="73"/>
        <end position="75"/>
    </location>
    <ligand>
        <name>substrate</name>
    </ligand>
</feature>
<feature type="binding site" evidence="1">
    <location>
        <begin position="110"/>
        <end position="111"/>
    </location>
    <ligand>
        <name>substrate</name>
    </ligand>
</feature>
<evidence type="ECO:0000255" key="1">
    <source>
        <dbReference type="HAMAP-Rule" id="MF_01224"/>
    </source>
</evidence>
<proteinExistence type="inferred from homology"/>
<sequence>MLTHLDSQGRAHMVDVTDKATTFREATAEARVRMLPATLQMIVAGEHPKGDVFAVARIAGIQAAKKTSDLIPLCHPLMLTGVKVELSAEGDDCVHITARCKLSGQTGVEMEALTAASVAALTIYDMCKAVDRGMVIEQVRLLEKLGGKSGHYKLEEQA</sequence>
<gene>
    <name evidence="1" type="primary">moaC</name>
    <name type="ordered locus">Pmen_1034</name>
</gene>
<comment type="function">
    <text evidence="1">Catalyzes the conversion of (8S)-3',8-cyclo-7,8-dihydroguanosine 5'-triphosphate to cyclic pyranopterin monophosphate (cPMP).</text>
</comment>
<comment type="catalytic activity">
    <reaction evidence="1">
        <text>(8S)-3',8-cyclo-7,8-dihydroguanosine 5'-triphosphate = cyclic pyranopterin phosphate + diphosphate</text>
        <dbReference type="Rhea" id="RHEA:49580"/>
        <dbReference type="ChEBI" id="CHEBI:33019"/>
        <dbReference type="ChEBI" id="CHEBI:59648"/>
        <dbReference type="ChEBI" id="CHEBI:131766"/>
        <dbReference type="EC" id="4.6.1.17"/>
    </reaction>
</comment>
<comment type="pathway">
    <text evidence="1">Cofactor biosynthesis; molybdopterin biosynthesis.</text>
</comment>
<comment type="subunit">
    <text evidence="1">Homohexamer; trimer of dimers.</text>
</comment>
<comment type="similarity">
    <text evidence="1">Belongs to the MoaC family.</text>
</comment>
<dbReference type="EC" id="4.6.1.17" evidence="1"/>
<dbReference type="EMBL" id="CP000680">
    <property type="protein sequence ID" value="ABP83802.1"/>
    <property type="molecule type" value="Genomic_DNA"/>
</dbReference>
<dbReference type="SMR" id="A4XR36"/>
<dbReference type="STRING" id="399739.Pmen_1034"/>
<dbReference type="KEGG" id="pmy:Pmen_1034"/>
<dbReference type="PATRIC" id="fig|399739.8.peg.1043"/>
<dbReference type="eggNOG" id="COG0315">
    <property type="taxonomic scope" value="Bacteria"/>
</dbReference>
<dbReference type="HOGENOM" id="CLU_074693_1_1_6"/>
<dbReference type="OrthoDB" id="9794429at2"/>
<dbReference type="UniPathway" id="UPA00344"/>
<dbReference type="GO" id="GO:0061799">
    <property type="term" value="F:cyclic pyranopterin monophosphate synthase activity"/>
    <property type="evidence" value="ECO:0007669"/>
    <property type="project" value="UniProtKB-UniRule"/>
</dbReference>
<dbReference type="GO" id="GO:0006777">
    <property type="term" value="P:Mo-molybdopterin cofactor biosynthetic process"/>
    <property type="evidence" value="ECO:0007669"/>
    <property type="project" value="UniProtKB-UniRule"/>
</dbReference>
<dbReference type="CDD" id="cd01420">
    <property type="entry name" value="MoaC_PE"/>
    <property type="match status" value="1"/>
</dbReference>
<dbReference type="FunFam" id="3.30.70.640:FF:000001">
    <property type="entry name" value="Cyclic pyranopterin monophosphate synthase"/>
    <property type="match status" value="1"/>
</dbReference>
<dbReference type="Gene3D" id="3.30.70.640">
    <property type="entry name" value="Molybdopterin cofactor biosynthesis C (MoaC) domain"/>
    <property type="match status" value="1"/>
</dbReference>
<dbReference type="HAMAP" id="MF_01224_B">
    <property type="entry name" value="MoaC_B"/>
    <property type="match status" value="1"/>
</dbReference>
<dbReference type="InterPro" id="IPR023045">
    <property type="entry name" value="MoaC"/>
</dbReference>
<dbReference type="InterPro" id="IPR047594">
    <property type="entry name" value="MoaC_bact/euk"/>
</dbReference>
<dbReference type="InterPro" id="IPR036522">
    <property type="entry name" value="MoaC_sf"/>
</dbReference>
<dbReference type="InterPro" id="IPR050105">
    <property type="entry name" value="MoCo_biosynth_MoaA/MoaC"/>
</dbReference>
<dbReference type="InterPro" id="IPR002820">
    <property type="entry name" value="Mopterin_CF_biosynth-C_dom"/>
</dbReference>
<dbReference type="NCBIfam" id="TIGR00581">
    <property type="entry name" value="moaC"/>
    <property type="match status" value="1"/>
</dbReference>
<dbReference type="NCBIfam" id="NF006870">
    <property type="entry name" value="PRK09364.1"/>
    <property type="match status" value="1"/>
</dbReference>
<dbReference type="PANTHER" id="PTHR22960:SF29">
    <property type="entry name" value="CYCLIC PYRANOPTERIN MONOPHOSPHATE SYNTHASE"/>
    <property type="match status" value="1"/>
</dbReference>
<dbReference type="PANTHER" id="PTHR22960">
    <property type="entry name" value="MOLYBDOPTERIN COFACTOR SYNTHESIS PROTEIN A"/>
    <property type="match status" value="1"/>
</dbReference>
<dbReference type="Pfam" id="PF01967">
    <property type="entry name" value="MoaC"/>
    <property type="match status" value="1"/>
</dbReference>
<dbReference type="SUPFAM" id="SSF55040">
    <property type="entry name" value="Molybdenum cofactor biosynthesis protein C, MoaC"/>
    <property type="match status" value="1"/>
</dbReference>
<protein>
    <recommendedName>
        <fullName evidence="1">Cyclic pyranopterin monophosphate synthase</fullName>
        <ecNumber evidence="1">4.6.1.17</ecNumber>
    </recommendedName>
    <alternativeName>
        <fullName evidence="1">Molybdenum cofactor biosynthesis protein C</fullName>
    </alternativeName>
</protein>
<reference key="1">
    <citation type="submission" date="2007-04" db="EMBL/GenBank/DDBJ databases">
        <title>Complete sequence of Pseudomonas mendocina ymp.</title>
        <authorList>
            <consortium name="US DOE Joint Genome Institute"/>
            <person name="Copeland A."/>
            <person name="Lucas S."/>
            <person name="Lapidus A."/>
            <person name="Barry K."/>
            <person name="Glavina del Rio T."/>
            <person name="Dalin E."/>
            <person name="Tice H."/>
            <person name="Pitluck S."/>
            <person name="Kiss H."/>
            <person name="Brettin T."/>
            <person name="Detter J.C."/>
            <person name="Bruce D."/>
            <person name="Han C."/>
            <person name="Schmutz J."/>
            <person name="Larimer F."/>
            <person name="Land M."/>
            <person name="Hauser L."/>
            <person name="Kyrpides N."/>
            <person name="Mikhailova N."/>
            <person name="Hersman L."/>
            <person name="Dubois J."/>
            <person name="Maurice P."/>
            <person name="Richardson P."/>
        </authorList>
    </citation>
    <scope>NUCLEOTIDE SEQUENCE [LARGE SCALE GENOMIC DNA]</scope>
    <source>
        <strain>ymp</strain>
    </source>
</reference>
<name>MOAC_ECTM1</name>
<accession>A4XR36</accession>